<accession>Q62HD3</accession>
<organism>
    <name type="scientific">Burkholderia mallei (strain ATCC 23344)</name>
    <dbReference type="NCBI Taxonomy" id="243160"/>
    <lineage>
        <taxon>Bacteria</taxon>
        <taxon>Pseudomonadati</taxon>
        <taxon>Pseudomonadota</taxon>
        <taxon>Betaproteobacteria</taxon>
        <taxon>Burkholderiales</taxon>
        <taxon>Burkholderiaceae</taxon>
        <taxon>Burkholderia</taxon>
        <taxon>pseudomallei group</taxon>
    </lineage>
</organism>
<sequence length="185" mass="19741">MENTQENPTDQTTEETGREAQAAEPAAQAAENAAPAAEAALAEAQAKIAELQESFLRAKAETENVRRRAQDDVAKAHKFAIEGFAENLLPVLDSLEAAVGDTSGDLAKVREGVELTLRQLTSALEKGRVAALNPVGEKFDPHLHQAISMVPADQEPNTVVAVLQKGYTIADRVLRPALVTVAQPK</sequence>
<comment type="function">
    <text evidence="1">Participates actively in the response to hyperosmotic and heat shock by preventing the aggregation of stress-denatured proteins, in association with DnaK and GrpE. It is the nucleotide exchange factor for DnaK and may function as a thermosensor. Unfolded proteins bind initially to DnaJ; upon interaction with the DnaJ-bound protein, DnaK hydrolyzes its bound ATP, resulting in the formation of a stable complex. GrpE releases ADP from DnaK; ATP binding to DnaK triggers the release of the substrate protein, thus completing the reaction cycle. Several rounds of ATP-dependent interactions between DnaJ, DnaK and GrpE are required for fully efficient folding.</text>
</comment>
<comment type="subunit">
    <text evidence="1">Homodimer.</text>
</comment>
<comment type="subcellular location">
    <subcellularLocation>
        <location evidence="1">Cytoplasm</location>
    </subcellularLocation>
</comment>
<comment type="similarity">
    <text evidence="1">Belongs to the GrpE family.</text>
</comment>
<name>GRPE_BURMA</name>
<evidence type="ECO:0000255" key="1">
    <source>
        <dbReference type="HAMAP-Rule" id="MF_01151"/>
    </source>
</evidence>
<evidence type="ECO:0000256" key="2">
    <source>
        <dbReference type="SAM" id="MobiDB-lite"/>
    </source>
</evidence>
<proteinExistence type="inferred from homology"/>
<keyword id="KW-0143">Chaperone</keyword>
<keyword id="KW-0963">Cytoplasm</keyword>
<keyword id="KW-1185">Reference proteome</keyword>
<keyword id="KW-0346">Stress response</keyword>
<dbReference type="EMBL" id="CP000010">
    <property type="protein sequence ID" value="AAU49782.1"/>
    <property type="molecule type" value="Genomic_DNA"/>
</dbReference>
<dbReference type="RefSeq" id="WP_004194243.1">
    <property type="nucleotide sequence ID" value="NC_006348.1"/>
</dbReference>
<dbReference type="RefSeq" id="YP_103887.1">
    <property type="nucleotide sequence ID" value="NC_006348.1"/>
</dbReference>
<dbReference type="SMR" id="Q62HD3"/>
<dbReference type="GeneID" id="93061417"/>
<dbReference type="KEGG" id="bma:BMA2328"/>
<dbReference type="PATRIC" id="fig|243160.12.peg.2396"/>
<dbReference type="eggNOG" id="COG0576">
    <property type="taxonomic scope" value="Bacteria"/>
</dbReference>
<dbReference type="HOGENOM" id="CLU_057217_6_1_4"/>
<dbReference type="Proteomes" id="UP000006693">
    <property type="component" value="Chromosome 1"/>
</dbReference>
<dbReference type="GO" id="GO:0005829">
    <property type="term" value="C:cytosol"/>
    <property type="evidence" value="ECO:0007669"/>
    <property type="project" value="TreeGrafter"/>
</dbReference>
<dbReference type="GO" id="GO:0000774">
    <property type="term" value="F:adenyl-nucleotide exchange factor activity"/>
    <property type="evidence" value="ECO:0007669"/>
    <property type="project" value="InterPro"/>
</dbReference>
<dbReference type="GO" id="GO:0042803">
    <property type="term" value="F:protein homodimerization activity"/>
    <property type="evidence" value="ECO:0007669"/>
    <property type="project" value="InterPro"/>
</dbReference>
<dbReference type="GO" id="GO:0051087">
    <property type="term" value="F:protein-folding chaperone binding"/>
    <property type="evidence" value="ECO:0007669"/>
    <property type="project" value="InterPro"/>
</dbReference>
<dbReference type="GO" id="GO:0051082">
    <property type="term" value="F:unfolded protein binding"/>
    <property type="evidence" value="ECO:0007669"/>
    <property type="project" value="TreeGrafter"/>
</dbReference>
<dbReference type="GO" id="GO:0006457">
    <property type="term" value="P:protein folding"/>
    <property type="evidence" value="ECO:0007669"/>
    <property type="project" value="InterPro"/>
</dbReference>
<dbReference type="CDD" id="cd00446">
    <property type="entry name" value="GrpE"/>
    <property type="match status" value="1"/>
</dbReference>
<dbReference type="FunFam" id="2.30.22.10:FF:000001">
    <property type="entry name" value="Protein GrpE"/>
    <property type="match status" value="1"/>
</dbReference>
<dbReference type="Gene3D" id="3.90.20.20">
    <property type="match status" value="1"/>
</dbReference>
<dbReference type="Gene3D" id="2.30.22.10">
    <property type="entry name" value="Head domain of nucleotide exchange factor GrpE"/>
    <property type="match status" value="1"/>
</dbReference>
<dbReference type="HAMAP" id="MF_01151">
    <property type="entry name" value="GrpE"/>
    <property type="match status" value="1"/>
</dbReference>
<dbReference type="InterPro" id="IPR000740">
    <property type="entry name" value="GrpE"/>
</dbReference>
<dbReference type="InterPro" id="IPR013805">
    <property type="entry name" value="GrpE_coiled_coil"/>
</dbReference>
<dbReference type="InterPro" id="IPR009012">
    <property type="entry name" value="GrpE_head"/>
</dbReference>
<dbReference type="NCBIfam" id="NF010737">
    <property type="entry name" value="PRK14139.1"/>
    <property type="match status" value="1"/>
</dbReference>
<dbReference type="NCBIfam" id="NF010738">
    <property type="entry name" value="PRK14140.1"/>
    <property type="match status" value="1"/>
</dbReference>
<dbReference type="NCBIfam" id="NF010748">
    <property type="entry name" value="PRK14150.1"/>
    <property type="match status" value="1"/>
</dbReference>
<dbReference type="PANTHER" id="PTHR21237">
    <property type="entry name" value="GRPE PROTEIN"/>
    <property type="match status" value="1"/>
</dbReference>
<dbReference type="PANTHER" id="PTHR21237:SF23">
    <property type="entry name" value="GRPE PROTEIN HOMOLOG, MITOCHONDRIAL"/>
    <property type="match status" value="1"/>
</dbReference>
<dbReference type="Pfam" id="PF01025">
    <property type="entry name" value="GrpE"/>
    <property type="match status" value="1"/>
</dbReference>
<dbReference type="PRINTS" id="PR00773">
    <property type="entry name" value="GRPEPROTEIN"/>
</dbReference>
<dbReference type="SUPFAM" id="SSF58014">
    <property type="entry name" value="Coiled-coil domain of nucleotide exchange factor GrpE"/>
    <property type="match status" value="1"/>
</dbReference>
<dbReference type="SUPFAM" id="SSF51064">
    <property type="entry name" value="Head domain of nucleotide exchange factor GrpE"/>
    <property type="match status" value="1"/>
</dbReference>
<dbReference type="PROSITE" id="PS01071">
    <property type="entry name" value="GRPE"/>
    <property type="match status" value="1"/>
</dbReference>
<feature type="chain" id="PRO_1000053554" description="Protein GrpE">
    <location>
        <begin position="1"/>
        <end position="185"/>
    </location>
</feature>
<feature type="region of interest" description="Disordered" evidence="2">
    <location>
        <begin position="1"/>
        <end position="38"/>
    </location>
</feature>
<feature type="compositionally biased region" description="Polar residues" evidence="2">
    <location>
        <begin position="1"/>
        <end position="11"/>
    </location>
</feature>
<feature type="compositionally biased region" description="Low complexity" evidence="2">
    <location>
        <begin position="19"/>
        <end position="38"/>
    </location>
</feature>
<reference key="1">
    <citation type="journal article" date="2004" name="Proc. Natl. Acad. Sci. U.S.A.">
        <title>Structural flexibility in the Burkholderia mallei genome.</title>
        <authorList>
            <person name="Nierman W.C."/>
            <person name="DeShazer D."/>
            <person name="Kim H.S."/>
            <person name="Tettelin H."/>
            <person name="Nelson K.E."/>
            <person name="Feldblyum T.V."/>
            <person name="Ulrich R.L."/>
            <person name="Ronning C.M."/>
            <person name="Brinkac L.M."/>
            <person name="Daugherty S.C."/>
            <person name="Davidsen T.D."/>
            <person name="DeBoy R.T."/>
            <person name="Dimitrov G."/>
            <person name="Dodson R.J."/>
            <person name="Durkin A.S."/>
            <person name="Gwinn M.L."/>
            <person name="Haft D.H."/>
            <person name="Khouri H.M."/>
            <person name="Kolonay J.F."/>
            <person name="Madupu R."/>
            <person name="Mohammoud Y."/>
            <person name="Nelson W.C."/>
            <person name="Radune D."/>
            <person name="Romero C.M."/>
            <person name="Sarria S."/>
            <person name="Selengut J."/>
            <person name="Shamblin C."/>
            <person name="Sullivan S.A."/>
            <person name="White O."/>
            <person name="Yu Y."/>
            <person name="Zafar N."/>
            <person name="Zhou L."/>
            <person name="Fraser C.M."/>
        </authorList>
    </citation>
    <scope>NUCLEOTIDE SEQUENCE [LARGE SCALE GENOMIC DNA]</scope>
    <source>
        <strain>ATCC 23344</strain>
    </source>
</reference>
<gene>
    <name evidence="1" type="primary">grpE</name>
    <name type="ordered locus">BMA2328</name>
</gene>
<protein>
    <recommendedName>
        <fullName evidence="1">Protein GrpE</fullName>
    </recommendedName>
    <alternativeName>
        <fullName evidence="1">HSP-70 cofactor</fullName>
    </alternativeName>
</protein>